<protein>
    <recommendedName>
        <fullName evidence="1">Lipoyl synthase, mitochondrial</fullName>
        <ecNumber evidence="1">2.8.1.8</ecNumber>
    </recommendedName>
    <alternativeName>
        <fullName evidence="1">Lipoate synthase</fullName>
        <shortName evidence="1">LS</shortName>
        <shortName evidence="1">Lip-syn</shortName>
    </alternativeName>
    <alternativeName>
        <fullName evidence="1">Lipoic acid synthase</fullName>
    </alternativeName>
</protein>
<gene>
    <name evidence="1" type="primary">LIP5</name>
    <name type="ORF">AWRI1631_153490</name>
</gene>
<accession>B5VS81</accession>
<reference key="1">
    <citation type="journal article" date="2008" name="FEMS Yeast Res.">
        <title>Comparative genome analysis of a Saccharomyces cerevisiae wine strain.</title>
        <authorList>
            <person name="Borneman A.R."/>
            <person name="Forgan A.H."/>
            <person name="Pretorius I.S."/>
            <person name="Chambers P.J."/>
        </authorList>
    </citation>
    <scope>NUCLEOTIDE SEQUENCE [LARGE SCALE GENOMIC DNA]</scope>
    <source>
        <strain>AWRI1631</strain>
    </source>
</reference>
<evidence type="ECO:0000255" key="1">
    <source>
        <dbReference type="HAMAP-Rule" id="MF_03123"/>
    </source>
</evidence>
<evidence type="ECO:0000255" key="2">
    <source>
        <dbReference type="PROSITE-ProRule" id="PRU01266"/>
    </source>
</evidence>
<evidence type="ECO:0000256" key="3">
    <source>
        <dbReference type="SAM" id="MobiDB-lite"/>
    </source>
</evidence>
<name>LIPA_YEAS6</name>
<comment type="function">
    <text evidence="1">Catalyzes the radical-mediated insertion of two sulfur atoms into the C-6 and C-8 positions of the octanoyl moiety bound to the lipoyl domains of lipoate-dependent enzymes, thereby converting the octanoylated domains into lipoylated derivatives.</text>
</comment>
<comment type="catalytic activity">
    <reaction evidence="1">
        <text>[[Fe-S] cluster scaffold protein carrying a second [4Fe-4S](2+) cluster] + N(6)-octanoyl-L-lysyl-[protein] + 2 oxidized [2Fe-2S]-[ferredoxin] + 2 S-adenosyl-L-methionine + 4 H(+) = [[Fe-S] cluster scaffold protein] + N(6)-[(R)-dihydrolipoyl]-L-lysyl-[protein] + 4 Fe(3+) + 2 hydrogen sulfide + 2 5'-deoxyadenosine + 2 L-methionine + 2 reduced [2Fe-2S]-[ferredoxin]</text>
        <dbReference type="Rhea" id="RHEA:16585"/>
        <dbReference type="Rhea" id="RHEA-COMP:9928"/>
        <dbReference type="Rhea" id="RHEA-COMP:10000"/>
        <dbReference type="Rhea" id="RHEA-COMP:10001"/>
        <dbReference type="Rhea" id="RHEA-COMP:10475"/>
        <dbReference type="Rhea" id="RHEA-COMP:14568"/>
        <dbReference type="Rhea" id="RHEA-COMP:14569"/>
        <dbReference type="ChEBI" id="CHEBI:15378"/>
        <dbReference type="ChEBI" id="CHEBI:17319"/>
        <dbReference type="ChEBI" id="CHEBI:29034"/>
        <dbReference type="ChEBI" id="CHEBI:29919"/>
        <dbReference type="ChEBI" id="CHEBI:33722"/>
        <dbReference type="ChEBI" id="CHEBI:33737"/>
        <dbReference type="ChEBI" id="CHEBI:33738"/>
        <dbReference type="ChEBI" id="CHEBI:57844"/>
        <dbReference type="ChEBI" id="CHEBI:59789"/>
        <dbReference type="ChEBI" id="CHEBI:78809"/>
        <dbReference type="ChEBI" id="CHEBI:83100"/>
        <dbReference type="EC" id="2.8.1.8"/>
    </reaction>
</comment>
<comment type="cofactor">
    <cofactor evidence="1">
        <name>[4Fe-4S] cluster</name>
        <dbReference type="ChEBI" id="CHEBI:49883"/>
    </cofactor>
    <text evidence="1">Binds 2 [4Fe-4S] clusters per subunit. One cluster is coordinated with 3 cysteines and an exchangeable S-adenosyl-L-methionine.</text>
</comment>
<comment type="pathway">
    <text evidence="1">Protein modification; protein lipoylation via endogenous pathway; protein N(6)-(lipoyl)lysine from octanoyl-[acyl-carrier-protein]: step 2/2.</text>
</comment>
<comment type="subcellular location">
    <subcellularLocation>
        <location evidence="1">Mitochondrion</location>
    </subcellularLocation>
</comment>
<comment type="similarity">
    <text evidence="1">Belongs to the radical SAM superfamily. Lipoyl synthase family.</text>
</comment>
<feature type="transit peptide" description="Mitochondrion" evidence="1">
    <location>
        <begin position="1"/>
        <end position="18"/>
    </location>
</feature>
<feature type="chain" id="PRO_0000398286" description="Lipoyl synthase, mitochondrial">
    <location>
        <begin position="19"/>
        <end position="414"/>
    </location>
</feature>
<feature type="domain" description="Radical SAM core" evidence="2">
    <location>
        <begin position="164"/>
        <end position="385"/>
    </location>
</feature>
<feature type="region of interest" description="Disordered" evidence="3">
    <location>
        <begin position="51"/>
        <end position="75"/>
    </location>
</feature>
<feature type="compositionally biased region" description="Polar residues" evidence="3">
    <location>
        <begin position="51"/>
        <end position="67"/>
    </location>
</feature>
<feature type="binding site" evidence="1">
    <location>
        <position position="150"/>
    </location>
    <ligand>
        <name>[4Fe-4S] cluster</name>
        <dbReference type="ChEBI" id="CHEBI:49883"/>
        <label>1</label>
    </ligand>
</feature>
<feature type="binding site" evidence="1">
    <location>
        <position position="155"/>
    </location>
    <ligand>
        <name>[4Fe-4S] cluster</name>
        <dbReference type="ChEBI" id="CHEBI:49883"/>
        <label>1</label>
    </ligand>
</feature>
<feature type="binding site" evidence="1">
    <location>
        <position position="161"/>
    </location>
    <ligand>
        <name>[4Fe-4S] cluster</name>
        <dbReference type="ChEBI" id="CHEBI:49883"/>
        <label>1</label>
    </ligand>
</feature>
<feature type="binding site" evidence="1">
    <location>
        <position position="181"/>
    </location>
    <ligand>
        <name>[4Fe-4S] cluster</name>
        <dbReference type="ChEBI" id="CHEBI:49883"/>
        <label>2</label>
        <note>4Fe-4S-S-AdoMet</note>
    </ligand>
</feature>
<feature type="binding site" evidence="1">
    <location>
        <position position="185"/>
    </location>
    <ligand>
        <name>[4Fe-4S] cluster</name>
        <dbReference type="ChEBI" id="CHEBI:49883"/>
        <label>2</label>
        <note>4Fe-4S-S-AdoMet</note>
    </ligand>
</feature>
<feature type="binding site" evidence="1">
    <location>
        <position position="188"/>
    </location>
    <ligand>
        <name>[4Fe-4S] cluster</name>
        <dbReference type="ChEBI" id="CHEBI:49883"/>
        <label>2</label>
        <note>4Fe-4S-S-AdoMet</note>
    </ligand>
</feature>
<feature type="binding site" evidence="1">
    <location>
        <position position="396"/>
    </location>
    <ligand>
        <name>[4Fe-4S] cluster</name>
        <dbReference type="ChEBI" id="CHEBI:49883"/>
        <label>1</label>
    </ligand>
</feature>
<organism>
    <name type="scientific">Saccharomyces cerevisiae (strain AWRI1631)</name>
    <name type="common">Baker's yeast</name>
    <dbReference type="NCBI Taxonomy" id="545124"/>
    <lineage>
        <taxon>Eukaryota</taxon>
        <taxon>Fungi</taxon>
        <taxon>Dikarya</taxon>
        <taxon>Ascomycota</taxon>
        <taxon>Saccharomycotina</taxon>
        <taxon>Saccharomycetes</taxon>
        <taxon>Saccharomycetales</taxon>
        <taxon>Saccharomycetaceae</taxon>
        <taxon>Saccharomyces</taxon>
    </lineage>
</organism>
<sequence>MYRRSVGVLFVGRNTRWISSTIRCGTSATRPIRSNALNTDSDNASVRVPVGNSTEVENATSQLTGTSGKRRKGNRKRITEFKDALNLGPSFADFVSGKASKMILDPLEKARQNTEEAKKLPRWLKVPIPKGTNYHKLKGDVKELGLSTVCEEARCPNIGECWGGKDKSKATATIMLLGDTCTRGCRFCSVKTNRTPSKPDPMEPENTAEAIKRWGLGYVVLTTVDRDDLVDGGANHLAETVRKIKQKAPNTLVETLSGDFRGDLKMVDIMAQCGLDVYAHNLETVESLTPHVRDRRATYRQSLSVLERAKATVPSLITKTSIMLGLGETDEQITQTLKDLRNIQCDVVTFGQYMRPTKRHMKVVEYVKPEKFDYWKERALEMGFLYCASGPLVRSSYKAGEAFIENVLKKRNMK</sequence>
<dbReference type="EC" id="2.8.1.8" evidence="1"/>
<dbReference type="EMBL" id="ABSV01002195">
    <property type="protein sequence ID" value="EDZ69210.1"/>
    <property type="molecule type" value="Genomic_DNA"/>
</dbReference>
<dbReference type="SMR" id="B5VS81"/>
<dbReference type="UniPathway" id="UPA00538">
    <property type="reaction ID" value="UER00593"/>
</dbReference>
<dbReference type="Proteomes" id="UP000008988">
    <property type="component" value="Unassembled WGS sequence"/>
</dbReference>
<dbReference type="GO" id="GO:0005739">
    <property type="term" value="C:mitochondrion"/>
    <property type="evidence" value="ECO:0007669"/>
    <property type="project" value="UniProtKB-SubCell"/>
</dbReference>
<dbReference type="GO" id="GO:0051539">
    <property type="term" value="F:4 iron, 4 sulfur cluster binding"/>
    <property type="evidence" value="ECO:0007669"/>
    <property type="project" value="UniProtKB-UniRule"/>
</dbReference>
<dbReference type="GO" id="GO:0016992">
    <property type="term" value="F:lipoate synthase activity"/>
    <property type="evidence" value="ECO:0007669"/>
    <property type="project" value="UniProtKB-UniRule"/>
</dbReference>
<dbReference type="GO" id="GO:0046872">
    <property type="term" value="F:metal ion binding"/>
    <property type="evidence" value="ECO:0007669"/>
    <property type="project" value="UniProtKB-KW"/>
</dbReference>
<dbReference type="CDD" id="cd01335">
    <property type="entry name" value="Radical_SAM"/>
    <property type="match status" value="1"/>
</dbReference>
<dbReference type="FunFam" id="3.20.20.70:FF:000036">
    <property type="entry name" value="Lipoyl synthase, mitochondrial"/>
    <property type="match status" value="1"/>
</dbReference>
<dbReference type="Gene3D" id="3.20.20.70">
    <property type="entry name" value="Aldolase class I"/>
    <property type="match status" value="1"/>
</dbReference>
<dbReference type="HAMAP" id="MF_00206">
    <property type="entry name" value="Lipoyl_synth"/>
    <property type="match status" value="1"/>
</dbReference>
<dbReference type="InterPro" id="IPR013785">
    <property type="entry name" value="Aldolase_TIM"/>
</dbReference>
<dbReference type="InterPro" id="IPR006638">
    <property type="entry name" value="Elp3/MiaA/NifB-like_rSAM"/>
</dbReference>
<dbReference type="InterPro" id="IPR031691">
    <property type="entry name" value="LIAS_N"/>
</dbReference>
<dbReference type="InterPro" id="IPR003698">
    <property type="entry name" value="Lipoyl_synth"/>
</dbReference>
<dbReference type="InterPro" id="IPR007197">
    <property type="entry name" value="rSAM"/>
</dbReference>
<dbReference type="NCBIfam" id="TIGR00510">
    <property type="entry name" value="lipA"/>
    <property type="match status" value="1"/>
</dbReference>
<dbReference type="NCBIfam" id="NF004019">
    <property type="entry name" value="PRK05481.1"/>
    <property type="match status" value="1"/>
</dbReference>
<dbReference type="NCBIfam" id="NF009544">
    <property type="entry name" value="PRK12928.1"/>
    <property type="match status" value="1"/>
</dbReference>
<dbReference type="PANTHER" id="PTHR10949">
    <property type="entry name" value="LIPOYL SYNTHASE"/>
    <property type="match status" value="1"/>
</dbReference>
<dbReference type="PANTHER" id="PTHR10949:SF0">
    <property type="entry name" value="LIPOYL SYNTHASE, MITOCHONDRIAL"/>
    <property type="match status" value="1"/>
</dbReference>
<dbReference type="Pfam" id="PF16881">
    <property type="entry name" value="LIAS_N"/>
    <property type="match status" value="1"/>
</dbReference>
<dbReference type="Pfam" id="PF04055">
    <property type="entry name" value="Radical_SAM"/>
    <property type="match status" value="1"/>
</dbReference>
<dbReference type="PIRSF" id="PIRSF005963">
    <property type="entry name" value="Lipoyl_synth"/>
    <property type="match status" value="1"/>
</dbReference>
<dbReference type="SFLD" id="SFLDF00271">
    <property type="entry name" value="lipoyl_synthase"/>
    <property type="match status" value="1"/>
</dbReference>
<dbReference type="SFLD" id="SFLDG01058">
    <property type="entry name" value="lipoyl_synthase_like"/>
    <property type="match status" value="1"/>
</dbReference>
<dbReference type="SMART" id="SM00729">
    <property type="entry name" value="Elp3"/>
    <property type="match status" value="1"/>
</dbReference>
<dbReference type="SUPFAM" id="SSF102114">
    <property type="entry name" value="Radical SAM enzymes"/>
    <property type="match status" value="1"/>
</dbReference>
<dbReference type="PROSITE" id="PS51918">
    <property type="entry name" value="RADICAL_SAM"/>
    <property type="match status" value="1"/>
</dbReference>
<keyword id="KW-0004">4Fe-4S</keyword>
<keyword id="KW-0408">Iron</keyword>
<keyword id="KW-0411">Iron-sulfur</keyword>
<keyword id="KW-0479">Metal-binding</keyword>
<keyword id="KW-0496">Mitochondrion</keyword>
<keyword id="KW-0949">S-adenosyl-L-methionine</keyword>
<keyword id="KW-0808">Transferase</keyword>
<keyword id="KW-0809">Transit peptide</keyword>
<proteinExistence type="inferred from homology"/>